<evidence type="ECO:0000255" key="1">
    <source>
        <dbReference type="HAMAP-Rule" id="MF_01844"/>
    </source>
</evidence>
<organism>
    <name type="scientific">Zymomonas mobilis subsp. mobilis (strain ATCC 31821 / ZM4 / CP4)</name>
    <dbReference type="NCBI Taxonomy" id="264203"/>
    <lineage>
        <taxon>Bacteria</taxon>
        <taxon>Pseudomonadati</taxon>
        <taxon>Pseudomonadota</taxon>
        <taxon>Alphaproteobacteria</taxon>
        <taxon>Sphingomonadales</taxon>
        <taxon>Zymomonadaceae</taxon>
        <taxon>Zymomonas</taxon>
    </lineage>
</organism>
<dbReference type="EMBL" id="AE008692">
    <property type="protein sequence ID" value="AAV88743.2"/>
    <property type="molecule type" value="Genomic_DNA"/>
</dbReference>
<dbReference type="RefSeq" id="WP_011240087.1">
    <property type="nucleotide sequence ID" value="NZ_CP035711.1"/>
</dbReference>
<dbReference type="SMR" id="Q5NRB1"/>
<dbReference type="STRING" id="264203.ZMO0119"/>
<dbReference type="KEGG" id="zmo:ZMO0119"/>
<dbReference type="eggNOG" id="COG3004">
    <property type="taxonomic scope" value="Bacteria"/>
</dbReference>
<dbReference type="HOGENOM" id="CLU_015803_1_0_5"/>
<dbReference type="Proteomes" id="UP000001173">
    <property type="component" value="Chromosome"/>
</dbReference>
<dbReference type="GO" id="GO:0005886">
    <property type="term" value="C:plasma membrane"/>
    <property type="evidence" value="ECO:0007669"/>
    <property type="project" value="UniProtKB-SubCell"/>
</dbReference>
<dbReference type="GO" id="GO:0015385">
    <property type="term" value="F:sodium:proton antiporter activity"/>
    <property type="evidence" value="ECO:0007669"/>
    <property type="project" value="TreeGrafter"/>
</dbReference>
<dbReference type="GO" id="GO:0006885">
    <property type="term" value="P:regulation of pH"/>
    <property type="evidence" value="ECO:0007669"/>
    <property type="project" value="InterPro"/>
</dbReference>
<dbReference type="Gene3D" id="1.20.1530.10">
    <property type="entry name" value="Na+/H+ antiporter like domain"/>
    <property type="match status" value="1"/>
</dbReference>
<dbReference type="HAMAP" id="MF_01844">
    <property type="entry name" value="NhaA"/>
    <property type="match status" value="1"/>
</dbReference>
<dbReference type="InterPro" id="IPR023171">
    <property type="entry name" value="Na/H_antiporter_dom_sf"/>
</dbReference>
<dbReference type="InterPro" id="IPR004670">
    <property type="entry name" value="NhaA"/>
</dbReference>
<dbReference type="NCBIfam" id="TIGR00773">
    <property type="entry name" value="NhaA"/>
    <property type="match status" value="1"/>
</dbReference>
<dbReference type="PANTHER" id="PTHR30341:SF0">
    <property type="entry name" value="NA(+)_H(+) ANTIPORTER NHAA"/>
    <property type="match status" value="1"/>
</dbReference>
<dbReference type="PANTHER" id="PTHR30341">
    <property type="entry name" value="SODIUM ION/PROTON ANTIPORTER NHAA-RELATED"/>
    <property type="match status" value="1"/>
</dbReference>
<dbReference type="Pfam" id="PF06965">
    <property type="entry name" value="Na_H_antiport_1"/>
    <property type="match status" value="1"/>
</dbReference>
<feature type="chain" id="PRO_0000334473" description="Na(+)/H(+) antiporter NhaA">
    <location>
        <begin position="1"/>
        <end position="388"/>
    </location>
</feature>
<feature type="transmembrane region" description="Helical" evidence="1">
    <location>
        <begin position="8"/>
        <end position="28"/>
    </location>
</feature>
<feature type="transmembrane region" description="Helical" evidence="1">
    <location>
        <begin position="57"/>
        <end position="77"/>
    </location>
</feature>
<feature type="transmembrane region" description="Helical" evidence="1">
    <location>
        <begin position="93"/>
        <end position="113"/>
    </location>
</feature>
<feature type="transmembrane region" description="Helical" evidence="1">
    <location>
        <begin position="123"/>
        <end position="143"/>
    </location>
</feature>
<feature type="transmembrane region" description="Helical" evidence="1">
    <location>
        <begin position="152"/>
        <end position="172"/>
    </location>
</feature>
<feature type="transmembrane region" description="Helical" evidence="1">
    <location>
        <begin position="175"/>
        <end position="195"/>
    </location>
</feature>
<feature type="transmembrane region" description="Helical" evidence="1">
    <location>
        <begin position="210"/>
        <end position="230"/>
    </location>
</feature>
<feature type="transmembrane region" description="Helical" evidence="1">
    <location>
        <begin position="254"/>
        <end position="274"/>
    </location>
</feature>
<feature type="transmembrane region" description="Helical" evidence="1">
    <location>
        <begin position="278"/>
        <end position="298"/>
    </location>
</feature>
<feature type="transmembrane region" description="Helical" evidence="1">
    <location>
        <begin position="328"/>
        <end position="348"/>
    </location>
</feature>
<feature type="transmembrane region" description="Helical" evidence="1">
    <location>
        <begin position="361"/>
        <end position="381"/>
    </location>
</feature>
<reference key="1">
    <citation type="journal article" date="2005" name="Nat. Biotechnol.">
        <title>The genome sequence of the ethanologenic bacterium Zymomonas mobilis ZM4.</title>
        <authorList>
            <person name="Seo J.-S."/>
            <person name="Chong H."/>
            <person name="Park H.S."/>
            <person name="Yoon K.-O."/>
            <person name="Jung C."/>
            <person name="Kim J.J."/>
            <person name="Hong J.H."/>
            <person name="Kim H."/>
            <person name="Kim J.-H."/>
            <person name="Kil J.-I."/>
            <person name="Park C.J."/>
            <person name="Oh H.-M."/>
            <person name="Lee J.-S."/>
            <person name="Jin S.-J."/>
            <person name="Um H.-W."/>
            <person name="Lee H.-J."/>
            <person name="Oh S.-J."/>
            <person name="Kim J.Y."/>
            <person name="Kang H.L."/>
            <person name="Lee S.Y."/>
            <person name="Lee K.J."/>
            <person name="Kang H.S."/>
        </authorList>
    </citation>
    <scope>NUCLEOTIDE SEQUENCE [LARGE SCALE GENOMIC DNA]</scope>
    <source>
        <strain>ATCC 31821 / ZM4 / CP4</strain>
    </source>
</reference>
<proteinExistence type="inferred from homology"/>
<gene>
    <name evidence="1" type="primary">nhaA</name>
    <name type="ordered locus">ZMO0119</name>
</gene>
<protein>
    <recommendedName>
        <fullName evidence="1">Na(+)/H(+) antiporter NhaA</fullName>
    </recommendedName>
    <alternativeName>
        <fullName evidence="1">Sodium/proton antiporter NhaA</fullName>
    </alternativeName>
</protein>
<sequence>MRFSIRRFFSAASGGAIILLLSALLGLLLSNSFLSESYFKVLHLKMPFSALDDAPNLAEFISIAPMSLFFFVVIAEIKEEIISGHLASFRRVILPLISALGGMMIPACLYGLITSGHLEVSRGWAIPIATDAAFTLPIILALGRHVSEGARVWLMALAIFDDLLGIVVIALFYASHLNGYALFAAGLITAVMIGLNKKSVQNLWVYASAGVVLWWALLVSGLHPTIAGVITGLALPSVADQPEKASPLERGKQIIAPWVTWLILPLFGFVSMGMSLSAMSFHVLLAPVPLGVALGLFLGKPIGVFGATIMATRLKIATLPKGTSLRMLFGLSLLCGIGFTISLFIAELAFSGSDFLVPAKYGILMGSLLSALAGWLWLRFLKFPAKGV</sequence>
<keyword id="KW-0050">Antiport</keyword>
<keyword id="KW-0997">Cell inner membrane</keyword>
<keyword id="KW-1003">Cell membrane</keyword>
<keyword id="KW-0406">Ion transport</keyword>
<keyword id="KW-0472">Membrane</keyword>
<keyword id="KW-1185">Reference proteome</keyword>
<keyword id="KW-0915">Sodium</keyword>
<keyword id="KW-0739">Sodium transport</keyword>
<keyword id="KW-0812">Transmembrane</keyword>
<keyword id="KW-1133">Transmembrane helix</keyword>
<keyword id="KW-0813">Transport</keyword>
<comment type="function">
    <text evidence="1">Na(+)/H(+) antiporter that extrudes sodium in exchange for external protons.</text>
</comment>
<comment type="catalytic activity">
    <reaction evidence="1">
        <text>Na(+)(in) + 2 H(+)(out) = Na(+)(out) + 2 H(+)(in)</text>
        <dbReference type="Rhea" id="RHEA:29251"/>
        <dbReference type="ChEBI" id="CHEBI:15378"/>
        <dbReference type="ChEBI" id="CHEBI:29101"/>
    </reaction>
    <physiologicalReaction direction="left-to-right" evidence="1">
        <dbReference type="Rhea" id="RHEA:29252"/>
    </physiologicalReaction>
</comment>
<comment type="subcellular location">
    <subcellularLocation>
        <location evidence="1">Cell inner membrane</location>
        <topology evidence="1">Multi-pass membrane protein</topology>
    </subcellularLocation>
</comment>
<comment type="similarity">
    <text evidence="1">Belongs to the NhaA Na(+)/H(+) (TC 2.A.33) antiporter family.</text>
</comment>
<accession>Q5NRB1</accession>
<name>NHAA_ZYMMO</name>